<comment type="function">
    <text evidence="1">RuBisCO catalyzes two reactions: the carboxylation of D-ribulose 1,5-bisphosphate, the primary event in carbon dioxide fixation, as well as the oxidative fragmentation of the pentose substrate in the photorespiration process. Both reactions occur simultaneously and in competition at the same active site.</text>
</comment>
<comment type="catalytic activity">
    <reaction evidence="1">
        <text>2 (2R)-3-phosphoglycerate + 2 H(+) = D-ribulose 1,5-bisphosphate + CO2 + H2O</text>
        <dbReference type="Rhea" id="RHEA:23124"/>
        <dbReference type="ChEBI" id="CHEBI:15377"/>
        <dbReference type="ChEBI" id="CHEBI:15378"/>
        <dbReference type="ChEBI" id="CHEBI:16526"/>
        <dbReference type="ChEBI" id="CHEBI:57870"/>
        <dbReference type="ChEBI" id="CHEBI:58272"/>
        <dbReference type="EC" id="4.1.1.39"/>
    </reaction>
</comment>
<comment type="catalytic activity">
    <reaction evidence="1">
        <text>D-ribulose 1,5-bisphosphate + O2 = 2-phosphoglycolate + (2R)-3-phosphoglycerate + 2 H(+)</text>
        <dbReference type="Rhea" id="RHEA:36631"/>
        <dbReference type="ChEBI" id="CHEBI:15378"/>
        <dbReference type="ChEBI" id="CHEBI:15379"/>
        <dbReference type="ChEBI" id="CHEBI:57870"/>
        <dbReference type="ChEBI" id="CHEBI:58033"/>
        <dbReference type="ChEBI" id="CHEBI:58272"/>
    </reaction>
</comment>
<comment type="cofactor">
    <cofactor evidence="1">
        <name>Mg(2+)</name>
        <dbReference type="ChEBI" id="CHEBI:18420"/>
    </cofactor>
    <text evidence="1">Binds 1 Mg(2+) ion per subunit.</text>
</comment>
<comment type="subunit">
    <text evidence="1">Heterohexadecamer of 8 large chains and 8 small chains.</text>
</comment>
<comment type="subcellular location">
    <subcellularLocation>
        <location>Plastid</location>
        <location>Cyanelle</location>
    </subcellularLocation>
</comment>
<comment type="miscellaneous">
    <text evidence="1">The basic functional RuBisCO is composed of a large chain homodimer in a 'head-to-tail' conformation. In form I RuBisCO this homodimer is arranged in a barrel-like tetramer with the small subunits forming a tetrameric 'cap' on each end of the 'barrel'.</text>
</comment>
<comment type="similarity">
    <text evidence="1">Belongs to the RuBisCO large chain family. Type I subfamily.</text>
</comment>
<organism>
    <name type="scientific">Cyanophora paradoxa</name>
    <dbReference type="NCBI Taxonomy" id="2762"/>
    <lineage>
        <taxon>Eukaryota</taxon>
        <taxon>Glaucocystophyceae</taxon>
        <taxon>Cyanophoraceae</taxon>
        <taxon>Cyanophora</taxon>
    </lineage>
</organism>
<dbReference type="EC" id="4.1.1.39" evidence="1"/>
<dbReference type="EMBL" id="X53045">
    <property type="protein sequence ID" value="CAA37214.1"/>
    <property type="molecule type" value="Genomic_DNA"/>
</dbReference>
<dbReference type="EMBL" id="U30821">
    <property type="protein sequence ID" value="AAA81271.1"/>
    <property type="molecule type" value="Genomic_DNA"/>
</dbReference>
<dbReference type="EMBL" id="M35728">
    <property type="status" value="NOT_ANNOTATED_CDS"/>
    <property type="molecule type" value="Genomic_DNA"/>
</dbReference>
<dbReference type="PIR" id="S14117">
    <property type="entry name" value="RKKTLX"/>
</dbReference>
<dbReference type="RefSeq" id="NP_043240.1">
    <property type="nucleotide sequence ID" value="NC_001675.1"/>
</dbReference>
<dbReference type="SMR" id="P24312"/>
<dbReference type="GeneID" id="801657"/>
<dbReference type="GO" id="GO:0009842">
    <property type="term" value="C:cyanelle"/>
    <property type="evidence" value="ECO:0007669"/>
    <property type="project" value="UniProtKB-SubCell"/>
</dbReference>
<dbReference type="GO" id="GO:0000287">
    <property type="term" value="F:magnesium ion binding"/>
    <property type="evidence" value="ECO:0007669"/>
    <property type="project" value="UniProtKB-UniRule"/>
</dbReference>
<dbReference type="GO" id="GO:0004497">
    <property type="term" value="F:monooxygenase activity"/>
    <property type="evidence" value="ECO:0007669"/>
    <property type="project" value="UniProtKB-KW"/>
</dbReference>
<dbReference type="GO" id="GO:0016984">
    <property type="term" value="F:ribulose-bisphosphate carboxylase activity"/>
    <property type="evidence" value="ECO:0007669"/>
    <property type="project" value="UniProtKB-UniRule"/>
</dbReference>
<dbReference type="GO" id="GO:0019253">
    <property type="term" value="P:reductive pentose-phosphate cycle"/>
    <property type="evidence" value="ECO:0007669"/>
    <property type="project" value="UniProtKB-UniRule"/>
</dbReference>
<dbReference type="CDD" id="cd08212">
    <property type="entry name" value="RuBisCO_large_I"/>
    <property type="match status" value="1"/>
</dbReference>
<dbReference type="Gene3D" id="3.20.20.110">
    <property type="entry name" value="Ribulose bisphosphate carboxylase, large subunit, C-terminal domain"/>
    <property type="match status" value="1"/>
</dbReference>
<dbReference type="Gene3D" id="3.30.70.150">
    <property type="entry name" value="RuBisCO large subunit, N-terminal domain"/>
    <property type="match status" value="1"/>
</dbReference>
<dbReference type="HAMAP" id="MF_01338">
    <property type="entry name" value="RuBisCO_L_type1"/>
    <property type="match status" value="1"/>
</dbReference>
<dbReference type="InterPro" id="IPR033966">
    <property type="entry name" value="RuBisCO"/>
</dbReference>
<dbReference type="InterPro" id="IPR020878">
    <property type="entry name" value="RuBisCo_large_chain_AS"/>
</dbReference>
<dbReference type="InterPro" id="IPR000685">
    <property type="entry name" value="RuBisCO_lsu_C"/>
</dbReference>
<dbReference type="InterPro" id="IPR036376">
    <property type="entry name" value="RuBisCO_lsu_C_sf"/>
</dbReference>
<dbReference type="InterPro" id="IPR017443">
    <property type="entry name" value="RuBisCO_lsu_fd_N"/>
</dbReference>
<dbReference type="InterPro" id="IPR036422">
    <property type="entry name" value="RuBisCO_lsu_N_sf"/>
</dbReference>
<dbReference type="InterPro" id="IPR020888">
    <property type="entry name" value="RuBisCO_lsuI"/>
</dbReference>
<dbReference type="NCBIfam" id="NF003252">
    <property type="entry name" value="PRK04208.1"/>
    <property type="match status" value="1"/>
</dbReference>
<dbReference type="PANTHER" id="PTHR42704">
    <property type="entry name" value="RIBULOSE BISPHOSPHATE CARBOXYLASE"/>
    <property type="match status" value="1"/>
</dbReference>
<dbReference type="PANTHER" id="PTHR42704:SF17">
    <property type="entry name" value="RIBULOSE BISPHOSPHATE CARBOXYLASE LARGE CHAIN"/>
    <property type="match status" value="1"/>
</dbReference>
<dbReference type="Pfam" id="PF00016">
    <property type="entry name" value="RuBisCO_large"/>
    <property type="match status" value="1"/>
</dbReference>
<dbReference type="Pfam" id="PF02788">
    <property type="entry name" value="RuBisCO_large_N"/>
    <property type="match status" value="1"/>
</dbReference>
<dbReference type="SFLD" id="SFLDG01052">
    <property type="entry name" value="RuBisCO"/>
    <property type="match status" value="1"/>
</dbReference>
<dbReference type="SFLD" id="SFLDS00014">
    <property type="entry name" value="RuBisCO"/>
    <property type="match status" value="1"/>
</dbReference>
<dbReference type="SFLD" id="SFLDG00301">
    <property type="entry name" value="RuBisCO-like_proteins"/>
    <property type="match status" value="1"/>
</dbReference>
<dbReference type="SUPFAM" id="SSF51649">
    <property type="entry name" value="RuBisCo, C-terminal domain"/>
    <property type="match status" value="1"/>
</dbReference>
<dbReference type="SUPFAM" id="SSF54966">
    <property type="entry name" value="RuBisCO, large subunit, small (N-terminal) domain"/>
    <property type="match status" value="1"/>
</dbReference>
<dbReference type="PROSITE" id="PS00157">
    <property type="entry name" value="RUBISCO_LARGE"/>
    <property type="match status" value="1"/>
</dbReference>
<geneLocation type="cyanelle"/>
<evidence type="ECO:0000255" key="1">
    <source>
        <dbReference type="HAMAP-Rule" id="MF_01338"/>
    </source>
</evidence>
<evidence type="ECO:0000305" key="2"/>
<accession>P24312</accession>
<protein>
    <recommendedName>
        <fullName evidence="1">Ribulose bisphosphate carboxylase large chain</fullName>
        <shortName evidence="1">RuBisCO large subunit</shortName>
        <ecNumber evidence="1">4.1.1.39</ecNumber>
    </recommendedName>
</protein>
<proteinExistence type="inferred from homology"/>
<reference key="1">
    <citation type="journal article" date="1990" name="Curr. Genet.">
        <title>Nucleotide sequence of the gene for the large subunit of Rubisco from Cyanophora paradoxa -- phylogenetic implications.</title>
        <authorList>
            <person name="Valentin K.-U."/>
            <person name="Zetsche K."/>
        </authorList>
    </citation>
    <scope>NUCLEOTIDE SEQUENCE [GENOMIC DNA]</scope>
</reference>
<reference key="2">
    <citation type="journal article" date="1995" name="Plant Mol. Biol. Rep.">
        <title>Nucleotide sequence of the cyanelle DNA from Cyanophora paradoxa.</title>
        <authorList>
            <person name="Stirewalt V.L."/>
            <person name="Michalowski C.B."/>
            <person name="Loeffelhardt W."/>
            <person name="Bohnert H.J."/>
            <person name="Bryant D.A."/>
        </authorList>
    </citation>
    <scope>NUCLEOTIDE SEQUENCE [LARGE SCALE GENOMIC DNA]</scope>
    <source>
        <strain>UTEX LB 555 / Pringsheim</strain>
    </source>
</reference>
<reference key="3">
    <citation type="book" date="1997" name="Eukaryotism and symbiosis">
        <title>The complete sequence of the cyanelle genome of Cyanophora paradoxa: the genetic complexity of a primitive plastid.</title>
        <editorList>
            <person name="Schenk H.E.A."/>
            <person name="Herrmann R."/>
            <person name="Jeon K.W."/>
            <person name="Mueller N.E."/>
            <person name="Schwemmler W."/>
        </editorList>
        <authorList>
            <person name="Loeffelhardt W."/>
            <person name="Stirewalt V.L."/>
            <person name="Michalowski C.B."/>
            <person name="Annarella M."/>
            <person name="Farley J.Y."/>
            <person name="Schluchter W.M."/>
            <person name="Chung S."/>
            <person name="Newmann-Spallart C."/>
            <person name="Steiner J.M."/>
            <person name="Jakowitsch J."/>
            <person name="Bohnert H.J."/>
            <person name="Bryant D.A."/>
        </authorList>
    </citation>
    <scope>NUCLEOTIDE SEQUENCE [LARGE SCALE GENOMIC DNA]</scope>
    <source>
        <strain>UTEX LB 555 / Pringsheim</strain>
    </source>
</reference>
<reference key="4">
    <citation type="journal article" date="1985" name="FEMS Microbiol. Lett.">
        <title>Cotranscription of the large and small subunit genes of ribulose-1,5-bisphosphate carboxylase/oxygenase in Cyanophora paradoxa.</title>
        <authorList>
            <person name="Starnes S.M."/>
            <person name="Lambert D.H."/>
            <person name="Maxwell E.S."/>
            <person name="Stevens S.E. Jr."/>
            <person name="Porter R.D."/>
            <person name="Shively J.M."/>
        </authorList>
    </citation>
    <scope>NUCLEOTIDE SEQUENCE [GENOMIC DNA] OF 471-475</scope>
</reference>
<feature type="chain" id="PRO_0000062433" description="Ribulose bisphosphate carboxylase large chain">
    <location>
        <begin position="1"/>
        <end position="475"/>
    </location>
</feature>
<feature type="active site" description="Proton acceptor" evidence="1">
    <location>
        <position position="175"/>
    </location>
</feature>
<feature type="active site" description="Proton acceptor" evidence="1">
    <location>
        <position position="294"/>
    </location>
</feature>
<feature type="binding site" description="in homodimeric partner" evidence="1">
    <location>
        <position position="123"/>
    </location>
    <ligand>
        <name>substrate</name>
    </ligand>
</feature>
<feature type="binding site" evidence="1">
    <location>
        <position position="173"/>
    </location>
    <ligand>
        <name>substrate</name>
    </ligand>
</feature>
<feature type="binding site" evidence="1">
    <location>
        <position position="177"/>
    </location>
    <ligand>
        <name>substrate</name>
    </ligand>
</feature>
<feature type="binding site" description="via carbamate group" evidence="1">
    <location>
        <position position="201"/>
    </location>
    <ligand>
        <name>Mg(2+)</name>
        <dbReference type="ChEBI" id="CHEBI:18420"/>
    </ligand>
</feature>
<feature type="binding site" evidence="1">
    <location>
        <position position="203"/>
    </location>
    <ligand>
        <name>Mg(2+)</name>
        <dbReference type="ChEBI" id="CHEBI:18420"/>
    </ligand>
</feature>
<feature type="binding site" evidence="1">
    <location>
        <position position="204"/>
    </location>
    <ligand>
        <name>Mg(2+)</name>
        <dbReference type="ChEBI" id="CHEBI:18420"/>
    </ligand>
</feature>
<feature type="binding site" evidence="1">
    <location>
        <position position="295"/>
    </location>
    <ligand>
        <name>substrate</name>
    </ligand>
</feature>
<feature type="binding site" evidence="1">
    <location>
        <position position="327"/>
    </location>
    <ligand>
        <name>substrate</name>
    </ligand>
</feature>
<feature type="binding site" evidence="1">
    <location>
        <position position="379"/>
    </location>
    <ligand>
        <name>substrate</name>
    </ligand>
</feature>
<feature type="site" description="Transition state stabilizer" evidence="1">
    <location>
        <position position="334"/>
    </location>
</feature>
<feature type="modified residue" description="N6-carboxylysine" evidence="1">
    <location>
        <position position="201"/>
    </location>
</feature>
<feature type="sequence conflict" description="In Ref. 1; CAA37214." evidence="2" ref="1">
    <original>T</original>
    <variation>S</variation>
    <location>
        <position position="247"/>
    </location>
</feature>
<name>RBL_CYAPA</name>
<keyword id="KW-0113">Calvin cycle</keyword>
<keyword id="KW-0120">Carbon dioxide fixation</keyword>
<keyword id="KW-0194">Cyanelle</keyword>
<keyword id="KW-0456">Lyase</keyword>
<keyword id="KW-0460">Magnesium</keyword>
<keyword id="KW-0479">Metal-binding</keyword>
<keyword id="KW-0503">Monooxygenase</keyword>
<keyword id="KW-0560">Oxidoreductase</keyword>
<keyword id="KW-0601">Photorespiration</keyword>
<keyword id="KW-0602">Photosynthesis</keyword>
<keyword id="KW-0934">Plastid</keyword>
<gene>
    <name evidence="1" type="primary">rbcL</name>
</gene>
<sequence length="475" mass="52767">MSSQARTQTRAGFKAGVKDYRLTYYTPEYTPKETDILAAFRMTPQPGVPPEECAAAVAAESSTGTWTTVWTDGLTSLDRYKGRSYGFEPVPGEENQYICYVAYPLDLFEEGSVTNMLTSIVGNVFGFKALRALRLEDLRIPVGYSKTFQGPPHGITVERDKLNKYGRALLGCTIKPKLGLSAKNYGRAVYECLRGGLDFTKDDENVNSQPFMRWRDRFLYVMDAIKKSQAETGEIKGHYLNATAPTTEEMIKRAEFAAELDAPIIMHDYITAGFTSNTTLARWCRDNGPLLHIHRAMHAVIDRQKNHGIHFRVLAKTLRMSGGDHLHSGTVVGKLEGDRAGTLGFVDLMRDDHIEQDRSRGIFFTQDWASMPGVMPVASGGIHIWHMPALVDIFGDDSCLQFGGGTLGHPWGNAPGAVANRVALEACVQARNEGRNLAREGNEIIREAARFSPELAAACEVWKEIKFEFETIDTI</sequence>